<keyword id="KW-0963">Cytoplasm</keyword>
<keyword id="KW-0328">Glycosyltransferase</keyword>
<keyword id="KW-0539">Nucleus</keyword>
<keyword id="KW-0660">Purine salvage</keyword>
<keyword id="KW-0808">Transferase</keyword>
<evidence type="ECO:0000255" key="1">
    <source>
        <dbReference type="HAMAP-Rule" id="MF_03155"/>
    </source>
</evidence>
<proteinExistence type="inferred from homology"/>
<accession>C4YQD9</accession>
<sequence length="344" mass="37552">MAKLVLKGNNLSKLIKMSVHREKIDLAKLPHHYDGPVTLAVIGGTGLYDLPNLHPVARLTISTSWGFPSGSITISKTDSGFPVAFLARHGAHHDLLPSDVPSRANIAALKKLGVKAIIAFSAVGSLQQEIKPRDFVLPTQIIDRTKGIRPSTFFEKGFVAHAMFGEPFDLKLNKLISDAIPSKGFLEGFDTDGTPVLHTKENTNNGEDLTIICMEGPQFSTRAESRLYRSWGGSVINMSVLPEAKLAREAEIAYQMICMSTDYDSWNESEEPVTVETVVGNLKANSANACKLAAKLIDEFAAKGGEIGKDLQGSMKYAVSTSPHGVKKELLEKMHFLFPGYWEV</sequence>
<reference key="1">
    <citation type="journal article" date="2009" name="Nature">
        <title>Evolution of pathogenicity and sexual reproduction in eight Candida genomes.</title>
        <authorList>
            <person name="Butler G."/>
            <person name="Rasmussen M.D."/>
            <person name="Lin M.F."/>
            <person name="Santos M.A.S."/>
            <person name="Sakthikumar S."/>
            <person name="Munro C.A."/>
            <person name="Rheinbay E."/>
            <person name="Grabherr M."/>
            <person name="Forche A."/>
            <person name="Reedy J.L."/>
            <person name="Agrafioti I."/>
            <person name="Arnaud M.B."/>
            <person name="Bates S."/>
            <person name="Brown A.J.P."/>
            <person name="Brunke S."/>
            <person name="Costanzo M.C."/>
            <person name="Fitzpatrick D.A."/>
            <person name="de Groot P.W.J."/>
            <person name="Harris D."/>
            <person name="Hoyer L.L."/>
            <person name="Hube B."/>
            <person name="Klis F.M."/>
            <person name="Kodira C."/>
            <person name="Lennard N."/>
            <person name="Logue M.E."/>
            <person name="Martin R."/>
            <person name="Neiman A.M."/>
            <person name="Nikolaou E."/>
            <person name="Quail M.A."/>
            <person name="Quinn J."/>
            <person name="Santos M.C."/>
            <person name="Schmitzberger F.F."/>
            <person name="Sherlock G."/>
            <person name="Shah P."/>
            <person name="Silverstein K.A.T."/>
            <person name="Skrzypek M.S."/>
            <person name="Soll D."/>
            <person name="Staggs R."/>
            <person name="Stansfield I."/>
            <person name="Stumpf M.P.H."/>
            <person name="Sudbery P.E."/>
            <person name="Srikantha T."/>
            <person name="Zeng Q."/>
            <person name="Berman J."/>
            <person name="Berriman M."/>
            <person name="Heitman J."/>
            <person name="Gow N.A.R."/>
            <person name="Lorenz M.C."/>
            <person name="Birren B.W."/>
            <person name="Kellis M."/>
            <person name="Cuomo C.A."/>
        </authorList>
    </citation>
    <scope>NUCLEOTIDE SEQUENCE [LARGE SCALE GENOMIC DNA]</scope>
    <source>
        <strain>WO-1</strain>
    </source>
</reference>
<feature type="chain" id="PRO_0000415125" description="S-methyl-5'-thioadenosine phosphorylase">
    <location>
        <begin position="1"/>
        <end position="344"/>
    </location>
</feature>
<feature type="binding site" evidence="1">
    <location>
        <position position="45"/>
    </location>
    <ligand>
        <name>phosphate</name>
        <dbReference type="ChEBI" id="CHEBI:43474"/>
    </ligand>
</feature>
<feature type="binding site" evidence="1">
    <location>
        <begin position="88"/>
        <end position="89"/>
    </location>
    <ligand>
        <name>phosphate</name>
        <dbReference type="ChEBI" id="CHEBI:43474"/>
    </ligand>
</feature>
<feature type="binding site" evidence="1">
    <location>
        <begin position="121"/>
        <end position="122"/>
    </location>
    <ligand>
        <name>phosphate</name>
        <dbReference type="ChEBI" id="CHEBI:43474"/>
    </ligand>
</feature>
<feature type="binding site" evidence="1">
    <location>
        <position position="238"/>
    </location>
    <ligand>
        <name>substrate</name>
    </ligand>
</feature>
<feature type="binding site" evidence="1">
    <location>
        <position position="239"/>
    </location>
    <ligand>
        <name>phosphate</name>
        <dbReference type="ChEBI" id="CHEBI:43474"/>
    </ligand>
</feature>
<feature type="binding site" evidence="1">
    <location>
        <begin position="262"/>
        <end position="264"/>
    </location>
    <ligand>
        <name>substrate</name>
    </ligand>
</feature>
<feature type="site" description="Important for substrate specificity" evidence="1">
    <location>
        <position position="220"/>
    </location>
</feature>
<feature type="site" description="Important for substrate specificity" evidence="1">
    <location>
        <position position="275"/>
    </location>
</feature>
<dbReference type="EC" id="2.4.2.28" evidence="1"/>
<dbReference type="EMBL" id="CM000310">
    <property type="protein sequence ID" value="EEQ44428.1"/>
    <property type="molecule type" value="Genomic_DNA"/>
</dbReference>
<dbReference type="SMR" id="C4YQD9"/>
<dbReference type="PaxDb" id="5476-C4YQD9"/>
<dbReference type="VEuPathDB" id="FungiDB:CAWG_02696"/>
<dbReference type="HOGENOM" id="CLU_054456_0_1_1"/>
<dbReference type="OMA" id="ADPFCPE"/>
<dbReference type="OrthoDB" id="6774at766764"/>
<dbReference type="UniPathway" id="UPA00904">
    <property type="reaction ID" value="UER00873"/>
</dbReference>
<dbReference type="Proteomes" id="UP000001429">
    <property type="component" value="Chromosome 3"/>
</dbReference>
<dbReference type="GO" id="GO:0005829">
    <property type="term" value="C:cytosol"/>
    <property type="evidence" value="ECO:0007669"/>
    <property type="project" value="TreeGrafter"/>
</dbReference>
<dbReference type="GO" id="GO:0005634">
    <property type="term" value="C:nucleus"/>
    <property type="evidence" value="ECO:0007669"/>
    <property type="project" value="UniProtKB-SubCell"/>
</dbReference>
<dbReference type="GO" id="GO:0017061">
    <property type="term" value="F:S-methyl-5-thioadenosine phosphorylase activity"/>
    <property type="evidence" value="ECO:0007669"/>
    <property type="project" value="UniProtKB-UniRule"/>
</dbReference>
<dbReference type="GO" id="GO:0019509">
    <property type="term" value="P:L-methionine salvage from methylthioadenosine"/>
    <property type="evidence" value="ECO:0007669"/>
    <property type="project" value="UniProtKB-UniRule"/>
</dbReference>
<dbReference type="GO" id="GO:0006166">
    <property type="term" value="P:purine ribonucleoside salvage"/>
    <property type="evidence" value="ECO:0007669"/>
    <property type="project" value="UniProtKB-KW"/>
</dbReference>
<dbReference type="CDD" id="cd09010">
    <property type="entry name" value="MTAP_SsMTAPII_like_MTIP"/>
    <property type="match status" value="1"/>
</dbReference>
<dbReference type="FunFam" id="3.40.50.1580:FF:000008">
    <property type="entry name" value="S-methyl-5'-thioadenosine phosphorylase"/>
    <property type="match status" value="1"/>
</dbReference>
<dbReference type="Gene3D" id="3.40.50.1580">
    <property type="entry name" value="Nucleoside phosphorylase domain"/>
    <property type="match status" value="1"/>
</dbReference>
<dbReference type="HAMAP" id="MF_01963">
    <property type="entry name" value="MTAP"/>
    <property type="match status" value="1"/>
</dbReference>
<dbReference type="InterPro" id="IPR010044">
    <property type="entry name" value="MTAP"/>
</dbReference>
<dbReference type="InterPro" id="IPR000845">
    <property type="entry name" value="Nucleoside_phosphorylase_d"/>
</dbReference>
<dbReference type="InterPro" id="IPR035994">
    <property type="entry name" value="Nucleoside_phosphorylase_sf"/>
</dbReference>
<dbReference type="InterPro" id="IPR018099">
    <property type="entry name" value="Purine_phosphorylase-2_CS"/>
</dbReference>
<dbReference type="NCBIfam" id="TIGR01694">
    <property type="entry name" value="MTAP"/>
    <property type="match status" value="1"/>
</dbReference>
<dbReference type="PANTHER" id="PTHR42679">
    <property type="entry name" value="S-METHYL-5'-THIOADENOSINE PHOSPHORYLASE"/>
    <property type="match status" value="1"/>
</dbReference>
<dbReference type="PANTHER" id="PTHR42679:SF2">
    <property type="entry name" value="S-METHYL-5'-THIOADENOSINE PHOSPHORYLASE"/>
    <property type="match status" value="1"/>
</dbReference>
<dbReference type="Pfam" id="PF01048">
    <property type="entry name" value="PNP_UDP_1"/>
    <property type="match status" value="1"/>
</dbReference>
<dbReference type="SUPFAM" id="SSF53167">
    <property type="entry name" value="Purine and uridine phosphorylases"/>
    <property type="match status" value="1"/>
</dbReference>
<dbReference type="PROSITE" id="PS01240">
    <property type="entry name" value="PNP_MTAP_2"/>
    <property type="match status" value="1"/>
</dbReference>
<name>MTAP_CANAW</name>
<protein>
    <recommendedName>
        <fullName evidence="1">S-methyl-5'-thioadenosine phosphorylase</fullName>
        <ecNumber evidence="1">2.4.2.28</ecNumber>
    </recommendedName>
    <alternativeName>
        <fullName evidence="1">5'-methylthioadenosine phosphorylase</fullName>
        <shortName evidence="1">MTA phosphorylase</shortName>
        <shortName evidence="1">MTAP</shortName>
        <shortName evidence="1">MTAPase</shortName>
    </alternativeName>
</protein>
<organism>
    <name type="scientific">Candida albicans (strain WO-1)</name>
    <name type="common">Yeast</name>
    <dbReference type="NCBI Taxonomy" id="294748"/>
    <lineage>
        <taxon>Eukaryota</taxon>
        <taxon>Fungi</taxon>
        <taxon>Dikarya</taxon>
        <taxon>Ascomycota</taxon>
        <taxon>Saccharomycotina</taxon>
        <taxon>Pichiomycetes</taxon>
        <taxon>Debaryomycetaceae</taxon>
        <taxon>Candida/Lodderomyces clade</taxon>
        <taxon>Candida</taxon>
    </lineage>
</organism>
<comment type="function">
    <text evidence="1">Catalyzes the reversible phosphorylation of S-methyl-5'-thioadenosine (MTA) to adenine and 5-methylthioribose-1-phosphate. Involved in the breakdown of MTA, a major by-product of polyamine biosynthesis. Responsible for the first step in the methionine salvage pathway after MTA has been generated from S-adenosylmethionine. Has broad substrate specificity with 6-aminopurine nucleosides as preferred substrates.</text>
</comment>
<comment type="catalytic activity">
    <reaction evidence="1">
        <text>S-methyl-5'-thioadenosine + phosphate = 5-(methylsulfanyl)-alpha-D-ribose 1-phosphate + adenine</text>
        <dbReference type="Rhea" id="RHEA:11852"/>
        <dbReference type="ChEBI" id="CHEBI:16708"/>
        <dbReference type="ChEBI" id="CHEBI:17509"/>
        <dbReference type="ChEBI" id="CHEBI:43474"/>
        <dbReference type="ChEBI" id="CHEBI:58533"/>
        <dbReference type="EC" id="2.4.2.28"/>
    </reaction>
</comment>
<comment type="pathway">
    <text evidence="1">Amino-acid biosynthesis; L-methionine biosynthesis via salvage pathway; S-methyl-5-thio-alpha-D-ribose 1-phosphate from S-methyl-5'-thioadenosine (phosphorylase route): step 1/1.</text>
</comment>
<comment type="subunit">
    <text evidence="1">Homotrimer.</text>
</comment>
<comment type="subcellular location">
    <subcellularLocation>
        <location evidence="1">Cytoplasm</location>
    </subcellularLocation>
    <subcellularLocation>
        <location evidence="1">Nucleus</location>
    </subcellularLocation>
</comment>
<comment type="similarity">
    <text evidence="1">Belongs to the PNP/MTAP phosphorylase family. MTAP subfamily.</text>
</comment>
<gene>
    <name evidence="1" type="primary">MEU1</name>
    <name type="ORF">CAWG_02696</name>
</gene>